<dbReference type="EC" id="1.1.1.67"/>
<dbReference type="EMBL" id="DS499598">
    <property type="protein sequence ID" value="EDP50830.1"/>
    <property type="molecule type" value="Genomic_DNA"/>
</dbReference>
<dbReference type="SMR" id="B0Y581"/>
<dbReference type="EnsemblFungi" id="EDP50830">
    <property type="protein sequence ID" value="EDP50830"/>
    <property type="gene ID" value="AFUB_071700"/>
</dbReference>
<dbReference type="VEuPathDB" id="FungiDB:AFUB_071700"/>
<dbReference type="HOGENOM" id="CLU_027324_0_1_1"/>
<dbReference type="OrthoDB" id="21633at5052"/>
<dbReference type="PhylomeDB" id="B0Y581"/>
<dbReference type="Proteomes" id="UP000001699">
    <property type="component" value="Unassembled WGS sequence"/>
</dbReference>
<dbReference type="GO" id="GO:0050086">
    <property type="term" value="F:mannitol 2-dehydrogenase activity"/>
    <property type="evidence" value="ECO:0007669"/>
    <property type="project" value="UniProtKB-EC"/>
</dbReference>
<dbReference type="GO" id="GO:0046029">
    <property type="term" value="F:mannitol dehydrogenase activity"/>
    <property type="evidence" value="ECO:0007669"/>
    <property type="project" value="TreeGrafter"/>
</dbReference>
<dbReference type="FunFam" id="3.40.50.720:FF:000129">
    <property type="entry name" value="D-mannonate oxidoreductase"/>
    <property type="match status" value="1"/>
</dbReference>
<dbReference type="FunFam" id="1.10.1040.10:FF:000028">
    <property type="entry name" value="Mannitol 2-dehydrogenase"/>
    <property type="match status" value="1"/>
</dbReference>
<dbReference type="Gene3D" id="1.10.1040.10">
    <property type="entry name" value="N-(1-d-carboxylethyl)-l-norvaline Dehydrogenase, domain 2"/>
    <property type="match status" value="1"/>
</dbReference>
<dbReference type="Gene3D" id="3.40.50.720">
    <property type="entry name" value="NAD(P)-binding Rossmann-like Domain"/>
    <property type="match status" value="1"/>
</dbReference>
<dbReference type="InterPro" id="IPR008927">
    <property type="entry name" value="6-PGluconate_DH-like_C_sf"/>
</dbReference>
<dbReference type="InterPro" id="IPR013328">
    <property type="entry name" value="6PGD_dom2"/>
</dbReference>
<dbReference type="InterPro" id="IPR000669">
    <property type="entry name" value="Mannitol_DH"/>
</dbReference>
<dbReference type="InterPro" id="IPR050988">
    <property type="entry name" value="Mannitol_DH/Oxidoreductase"/>
</dbReference>
<dbReference type="InterPro" id="IPR013118">
    <property type="entry name" value="Mannitol_DH_C"/>
</dbReference>
<dbReference type="InterPro" id="IPR013131">
    <property type="entry name" value="Mannitol_DH_N"/>
</dbReference>
<dbReference type="InterPro" id="IPR036291">
    <property type="entry name" value="NAD(P)-bd_dom_sf"/>
</dbReference>
<dbReference type="PANTHER" id="PTHR43362:SF1">
    <property type="entry name" value="MANNITOL DEHYDROGENASE 2-RELATED"/>
    <property type="match status" value="1"/>
</dbReference>
<dbReference type="PANTHER" id="PTHR43362">
    <property type="entry name" value="MANNITOL DEHYDROGENASE DSF1-RELATED"/>
    <property type="match status" value="1"/>
</dbReference>
<dbReference type="Pfam" id="PF01232">
    <property type="entry name" value="Mannitol_dh"/>
    <property type="match status" value="1"/>
</dbReference>
<dbReference type="Pfam" id="PF08125">
    <property type="entry name" value="Mannitol_dh_C"/>
    <property type="match status" value="1"/>
</dbReference>
<dbReference type="PRINTS" id="PR00084">
    <property type="entry name" value="MTLDHDRGNASE"/>
</dbReference>
<dbReference type="SUPFAM" id="SSF48179">
    <property type="entry name" value="6-phosphogluconate dehydrogenase C-terminal domain-like"/>
    <property type="match status" value="1"/>
</dbReference>
<dbReference type="SUPFAM" id="SSF51735">
    <property type="entry name" value="NAD(P)-binding Rossmann-fold domains"/>
    <property type="match status" value="1"/>
</dbReference>
<reference key="1">
    <citation type="journal article" date="2008" name="PLoS Genet.">
        <title>Genomic islands in the pathogenic filamentous fungus Aspergillus fumigatus.</title>
        <authorList>
            <person name="Fedorova N.D."/>
            <person name="Khaldi N."/>
            <person name="Joardar V.S."/>
            <person name="Maiti R."/>
            <person name="Amedeo P."/>
            <person name="Anderson M.J."/>
            <person name="Crabtree J."/>
            <person name="Silva J.C."/>
            <person name="Badger J.H."/>
            <person name="Albarraq A."/>
            <person name="Angiuoli S."/>
            <person name="Bussey H."/>
            <person name="Bowyer P."/>
            <person name="Cotty P.J."/>
            <person name="Dyer P.S."/>
            <person name="Egan A."/>
            <person name="Galens K."/>
            <person name="Fraser-Liggett C.M."/>
            <person name="Haas B.J."/>
            <person name="Inman J.M."/>
            <person name="Kent R."/>
            <person name="Lemieux S."/>
            <person name="Malavazi I."/>
            <person name="Orvis J."/>
            <person name="Roemer T."/>
            <person name="Ronning C.M."/>
            <person name="Sundaram J.P."/>
            <person name="Sutton G."/>
            <person name="Turner G."/>
            <person name="Venter J.C."/>
            <person name="White O.R."/>
            <person name="Whitty B.R."/>
            <person name="Youngman P."/>
            <person name="Wolfe K.H."/>
            <person name="Goldman G.H."/>
            <person name="Wortman J.R."/>
            <person name="Jiang B."/>
            <person name="Denning D.W."/>
            <person name="Nierman W.C."/>
        </authorList>
    </citation>
    <scope>NUCLEOTIDE SEQUENCE [LARGE SCALE GENOMIC DNA]</scope>
    <source>
        <strain>CBS 144.89 / FGSC A1163 / CEA10</strain>
    </source>
</reference>
<gene>
    <name type="ORF">AFUB_071700</name>
</gene>
<organism>
    <name type="scientific">Aspergillus fumigatus (strain CBS 144.89 / FGSC A1163 / CEA10)</name>
    <name type="common">Neosartorya fumigata</name>
    <dbReference type="NCBI Taxonomy" id="451804"/>
    <lineage>
        <taxon>Eukaryota</taxon>
        <taxon>Fungi</taxon>
        <taxon>Dikarya</taxon>
        <taxon>Ascomycota</taxon>
        <taxon>Pezizomycotina</taxon>
        <taxon>Eurotiomycetes</taxon>
        <taxon>Eurotiomycetidae</taxon>
        <taxon>Eurotiales</taxon>
        <taxon>Aspergillaceae</taxon>
        <taxon>Aspergillus</taxon>
        <taxon>Aspergillus subgen. Fumigati</taxon>
    </lineage>
</organism>
<accession>B0Y581</accession>
<sequence length="502" mass="56475">MAPLKLNSRNLSQIAAAGGALVKIPTYQRGRAVKEGIVHIGVGGFHRAHLAVYIDQLMQKHGVNDYAICGVGLQPFDSAMRDALASQDHLYTLIERSAKGSFAHVIGSINSYLFAPDNREAVIAKMAHPDTKIVSLTITESGYYYNENTHELQSEHPDIQFDLDPANEKAPRTTFGFLYAGLTRRYQQGLKPFTVMSCDNMQKNGSITRHMLESFARLRNPEVAEWIAEEGAFPNAMVDRITPQTSETDKTALAEKFGIVDSWPVVTEPFTQWVIEDQFSDGRPPFEKVGVQVVKDVHAVEQFEKHKLRLLNGSHSALGYPGQLAGFQYVHEVMANPLFRKFVWQMMQEEVKPLLPEIPGVDIDEYCNTLIERFTNPTIMDQLPRICLNASGKIPQFIMPSIAEAIWETGPFRRLCFVAAAWFHYIKGVDDRGKPFEVVDPMREELQAKARAGGNDPSELLSIKSLFGDDLRNDERFLREITTAMNDIARDGIMKTLPKYIN</sequence>
<proteinExistence type="inferred from homology"/>
<feature type="chain" id="PRO_0000371539" description="Mannitol 2-dehydrogenase">
    <location>
        <begin position="1"/>
        <end position="502"/>
    </location>
</feature>
<feature type="binding site" evidence="1">
    <location>
        <begin position="37"/>
        <end position="48"/>
    </location>
    <ligand>
        <name>NAD(+)</name>
        <dbReference type="ChEBI" id="CHEBI:57540"/>
    </ligand>
</feature>
<name>M2DH_ASPFC</name>
<keyword id="KW-0520">NAD</keyword>
<keyword id="KW-0560">Oxidoreductase</keyword>
<comment type="function">
    <text evidence="1">Catalyzes the NAD(H)-dependent interconversion of D-fructose and D-mannitol in the mannitol metabolic pathway.</text>
</comment>
<comment type="catalytic activity">
    <reaction>
        <text>D-mannitol + NAD(+) = D-fructose + NADH + H(+)</text>
        <dbReference type="Rhea" id="RHEA:12084"/>
        <dbReference type="ChEBI" id="CHEBI:15378"/>
        <dbReference type="ChEBI" id="CHEBI:16899"/>
        <dbReference type="ChEBI" id="CHEBI:37721"/>
        <dbReference type="ChEBI" id="CHEBI:57540"/>
        <dbReference type="ChEBI" id="CHEBI:57945"/>
        <dbReference type="EC" id="1.1.1.67"/>
    </reaction>
</comment>
<comment type="subunit">
    <text evidence="1">Monomer.</text>
</comment>
<comment type="similarity">
    <text evidence="2">Belongs to the mannitol dehydrogenase family.</text>
</comment>
<protein>
    <recommendedName>
        <fullName>Mannitol 2-dehydrogenase</fullName>
        <shortName>M2DH</shortName>
        <shortName>MDH</shortName>
        <ecNumber>1.1.1.67</ecNumber>
    </recommendedName>
</protein>
<evidence type="ECO:0000250" key="1"/>
<evidence type="ECO:0000305" key="2"/>